<gene>
    <name evidence="1" type="primary">rpmA</name>
    <name type="ordered locus">RT0737</name>
</gene>
<reference key="1">
    <citation type="journal article" date="2004" name="J. Bacteriol.">
        <title>Complete genome sequence of Rickettsia typhi and comparison with sequences of other Rickettsiae.</title>
        <authorList>
            <person name="McLeod M.P."/>
            <person name="Qin X."/>
            <person name="Karpathy S.E."/>
            <person name="Gioia J."/>
            <person name="Highlander S.K."/>
            <person name="Fox G.E."/>
            <person name="McNeill T.Z."/>
            <person name="Jiang H."/>
            <person name="Muzny D."/>
            <person name="Jacob L.S."/>
            <person name="Hawes A.C."/>
            <person name="Sodergren E."/>
            <person name="Gill R."/>
            <person name="Hume J."/>
            <person name="Morgan M."/>
            <person name="Fan G."/>
            <person name="Amin A.G."/>
            <person name="Gibbs R.A."/>
            <person name="Hong C."/>
            <person name="Yu X.-J."/>
            <person name="Walker D.H."/>
            <person name="Weinstock G.M."/>
        </authorList>
    </citation>
    <scope>NUCLEOTIDE SEQUENCE [LARGE SCALE GENOMIC DNA]</scope>
    <source>
        <strain>ATCC VR-144 / Wilmington</strain>
    </source>
</reference>
<protein>
    <recommendedName>
        <fullName evidence="1">Large ribosomal subunit protein bL27</fullName>
    </recommendedName>
    <alternativeName>
        <fullName evidence="3">50S ribosomal protein L27</fullName>
    </alternativeName>
</protein>
<feature type="chain" id="PRO_0000181157" description="Large ribosomal subunit protein bL27">
    <location>
        <begin position="1"/>
        <end position="86"/>
    </location>
</feature>
<feature type="region of interest" description="Disordered" evidence="2">
    <location>
        <begin position="1"/>
        <end position="26"/>
    </location>
</feature>
<proteinExistence type="inferred from homology"/>
<sequence>MATKKAGGSSRNGRDSAGRRLGIKKSDGQYVIPGNIIVRQRGTKVHPGINVGLGKDHTIFSLIEGRVEFLTKQNHKIVNVKEIANV</sequence>
<evidence type="ECO:0000255" key="1">
    <source>
        <dbReference type="HAMAP-Rule" id="MF_00539"/>
    </source>
</evidence>
<evidence type="ECO:0000256" key="2">
    <source>
        <dbReference type="SAM" id="MobiDB-lite"/>
    </source>
</evidence>
<evidence type="ECO:0000305" key="3"/>
<accession>Q68VZ8</accession>
<organism>
    <name type="scientific">Rickettsia typhi (strain ATCC VR-144 / Wilmington)</name>
    <dbReference type="NCBI Taxonomy" id="257363"/>
    <lineage>
        <taxon>Bacteria</taxon>
        <taxon>Pseudomonadati</taxon>
        <taxon>Pseudomonadota</taxon>
        <taxon>Alphaproteobacteria</taxon>
        <taxon>Rickettsiales</taxon>
        <taxon>Rickettsiaceae</taxon>
        <taxon>Rickettsieae</taxon>
        <taxon>Rickettsia</taxon>
        <taxon>typhus group</taxon>
    </lineage>
</organism>
<name>RL27_RICTY</name>
<comment type="similarity">
    <text evidence="1">Belongs to the bacterial ribosomal protein bL27 family.</text>
</comment>
<dbReference type="EMBL" id="AE017197">
    <property type="protein sequence ID" value="AAU04194.1"/>
    <property type="molecule type" value="Genomic_DNA"/>
</dbReference>
<dbReference type="RefSeq" id="WP_011191170.1">
    <property type="nucleotide sequence ID" value="NC_006142.1"/>
</dbReference>
<dbReference type="SMR" id="Q68VZ8"/>
<dbReference type="KEGG" id="rty:RT0737"/>
<dbReference type="eggNOG" id="COG0211">
    <property type="taxonomic scope" value="Bacteria"/>
</dbReference>
<dbReference type="HOGENOM" id="CLU_095424_4_1_5"/>
<dbReference type="OrthoDB" id="9803474at2"/>
<dbReference type="Proteomes" id="UP000000604">
    <property type="component" value="Chromosome"/>
</dbReference>
<dbReference type="GO" id="GO:1990904">
    <property type="term" value="C:ribonucleoprotein complex"/>
    <property type="evidence" value="ECO:0007669"/>
    <property type="project" value="UniProtKB-KW"/>
</dbReference>
<dbReference type="GO" id="GO:0005840">
    <property type="term" value="C:ribosome"/>
    <property type="evidence" value="ECO:0007669"/>
    <property type="project" value="UniProtKB-KW"/>
</dbReference>
<dbReference type="GO" id="GO:0003735">
    <property type="term" value="F:structural constituent of ribosome"/>
    <property type="evidence" value="ECO:0007669"/>
    <property type="project" value="InterPro"/>
</dbReference>
<dbReference type="GO" id="GO:0006412">
    <property type="term" value="P:translation"/>
    <property type="evidence" value="ECO:0007669"/>
    <property type="project" value="UniProtKB-UniRule"/>
</dbReference>
<dbReference type="FunFam" id="2.40.50.100:FF:000020">
    <property type="entry name" value="50S ribosomal protein L27"/>
    <property type="match status" value="1"/>
</dbReference>
<dbReference type="Gene3D" id="2.40.50.100">
    <property type="match status" value="1"/>
</dbReference>
<dbReference type="HAMAP" id="MF_00539">
    <property type="entry name" value="Ribosomal_bL27"/>
    <property type="match status" value="1"/>
</dbReference>
<dbReference type="InterPro" id="IPR001684">
    <property type="entry name" value="Ribosomal_bL27"/>
</dbReference>
<dbReference type="InterPro" id="IPR018261">
    <property type="entry name" value="Ribosomal_bL27_CS"/>
</dbReference>
<dbReference type="NCBIfam" id="TIGR00062">
    <property type="entry name" value="L27"/>
    <property type="match status" value="1"/>
</dbReference>
<dbReference type="PANTHER" id="PTHR15893:SF0">
    <property type="entry name" value="LARGE RIBOSOMAL SUBUNIT PROTEIN BL27M"/>
    <property type="match status" value="1"/>
</dbReference>
<dbReference type="PANTHER" id="PTHR15893">
    <property type="entry name" value="RIBOSOMAL PROTEIN L27"/>
    <property type="match status" value="1"/>
</dbReference>
<dbReference type="Pfam" id="PF01016">
    <property type="entry name" value="Ribosomal_L27"/>
    <property type="match status" value="1"/>
</dbReference>
<dbReference type="PRINTS" id="PR00063">
    <property type="entry name" value="RIBOSOMALL27"/>
</dbReference>
<dbReference type="SUPFAM" id="SSF110324">
    <property type="entry name" value="Ribosomal L27 protein-like"/>
    <property type="match status" value="1"/>
</dbReference>
<dbReference type="PROSITE" id="PS00831">
    <property type="entry name" value="RIBOSOMAL_L27"/>
    <property type="match status" value="1"/>
</dbReference>
<keyword id="KW-0687">Ribonucleoprotein</keyword>
<keyword id="KW-0689">Ribosomal protein</keyword>